<dbReference type="EMBL" id="AL049820">
    <property type="status" value="NOT_ANNOTATED_CDS"/>
    <property type="molecule type" value="Genomic_DNA"/>
</dbReference>
<dbReference type="EMBL" id="AL162578">
    <property type="status" value="NOT_ANNOTATED_CDS"/>
    <property type="molecule type" value="Genomic_DNA"/>
</dbReference>
<dbReference type="EMBL" id="AL355297">
    <property type="status" value="NOT_ANNOTATED_CDS"/>
    <property type="molecule type" value="Genomic_DNA"/>
</dbReference>
<dbReference type="EMBL" id="AL591545">
    <property type="status" value="NOT_ANNOTATED_CDS"/>
    <property type="molecule type" value="Genomic_DNA"/>
</dbReference>
<dbReference type="EMBL" id="AJ001216">
    <property type="status" value="NOT_ANNOTATED_CDS"/>
    <property type="molecule type" value="Genomic_DNA"/>
</dbReference>
<dbReference type="EMBL" id="Y08266">
    <property type="protein sequence ID" value="CAA69592.1"/>
    <property type="status" value="ALT_FRAME"/>
    <property type="molecule type" value="mRNA"/>
</dbReference>
<dbReference type="EMBL" id="AF521671">
    <property type="protein sequence ID" value="AAN03447.1"/>
    <property type="status" value="ALT_FRAME"/>
    <property type="molecule type" value="mRNA"/>
</dbReference>
<dbReference type="EMBL" id="AF253515">
    <property type="protein sequence ID" value="AAN70985.1"/>
    <property type="status" value="ALT_SEQ"/>
    <property type="molecule type" value="mRNA"/>
</dbReference>
<dbReference type="EMBL" id="AF468300">
    <property type="protein sequence ID" value="AAL76077.1"/>
    <property type="status" value="ALT_INIT"/>
    <property type="molecule type" value="mRNA"/>
</dbReference>
<dbReference type="EMBL" id="AF259792">
    <property type="protein sequence ID" value="AAG36928.1"/>
    <property type="status" value="ALT_INIT"/>
    <property type="molecule type" value="mRNA"/>
</dbReference>
<dbReference type="EMBL" id="AB033061">
    <property type="protein sequence ID" value="BAA86549.1"/>
    <property type="molecule type" value="mRNA"/>
</dbReference>
<dbReference type="CCDS" id="CCDS5251.2">
    <molecule id="Q8NFD5-5"/>
</dbReference>
<dbReference type="CCDS" id="CCDS55072.2">
    <molecule id="Q8NFD5-2"/>
</dbReference>
<dbReference type="CCDS" id="CCDS87459.2">
    <molecule id="Q8NFD5-3"/>
</dbReference>
<dbReference type="RefSeq" id="NP_001358585.1">
    <molecule id="Q8NFD5-2"/>
    <property type="nucleotide sequence ID" value="NM_001371656.1"/>
</dbReference>
<dbReference type="RefSeq" id="NP_001361749.1">
    <molecule id="Q8NFD5-2"/>
    <property type="nucleotide sequence ID" value="NM_001374820.1"/>
</dbReference>
<dbReference type="RefSeq" id="NP_001361757.1">
    <molecule id="Q8NFD5-3"/>
    <property type="nucleotide sequence ID" value="NM_001374828.1"/>
</dbReference>
<dbReference type="RefSeq" id="NP_059989.3">
    <molecule id="Q8NFD5-5"/>
    <property type="nucleotide sequence ID" value="NM_017519.3"/>
</dbReference>
<dbReference type="RefSeq" id="NP_065783.3">
    <property type="nucleotide sequence ID" value="NM_020732.3"/>
</dbReference>
<dbReference type="PDB" id="2CXY">
    <property type="method" value="X-ray"/>
    <property type="resolution" value="1.60 A"/>
    <property type="chains" value="A=1124-1242"/>
</dbReference>
<dbReference type="PDB" id="2EH9">
    <property type="method" value="X-ray"/>
    <property type="resolution" value="2.00 A"/>
    <property type="chains" value="A=1124-1242"/>
</dbReference>
<dbReference type="PDBsum" id="2CXY"/>
<dbReference type="PDBsum" id="2EH9"/>
<dbReference type="SMR" id="Q8NFD5"/>
<dbReference type="BioGRID" id="121559">
    <property type="interactions" value="172"/>
</dbReference>
<dbReference type="ComplexPortal" id="CPX-1205">
    <property type="entry name" value="SWI/SNF ATP-dependent chromatin remodeling complex, ACTL6A-ARID1B-SMARCA2 variant"/>
</dbReference>
<dbReference type="ComplexPortal" id="CPX-1206">
    <property type="entry name" value="SWI/SNF ATP-dependent chromatin remodeling complex, ACTL6A-ARID1B-SMARCA4 variant"/>
</dbReference>
<dbReference type="ComplexPortal" id="CPX-1210">
    <property type="entry name" value="SWI/SNF ATP-dependent chromatin remodeling complex, ACTL6B-ARID1B-SMARCA2 variant"/>
</dbReference>
<dbReference type="ComplexPortal" id="CPX-1211">
    <property type="entry name" value="SWI/SNF ATP-dependent chromatin remodeling complex, ACTL6B-ARID1B-SMARCA4 variant"/>
</dbReference>
<dbReference type="ComplexPortal" id="CPX-1213">
    <property type="entry name" value="Neural progenitor-specific SWI/SNF ATP-dependent chromatin remodeling complex, ARID1B-SMARCA2 variant"/>
</dbReference>
<dbReference type="ComplexPortal" id="CPX-1215">
    <property type="entry name" value="Neural progenitor-specific SWI/SNF ATP-dependent chromatin remodeling complex, ARID1B-SMARCA4 variant"/>
</dbReference>
<dbReference type="ComplexPortal" id="CPX-1217">
    <property type="entry name" value="Neuron-specific SWI/SNF ATP-dependent chromatin remodeling complex, ARID1B-SMARCA2 variant"/>
</dbReference>
<dbReference type="ComplexPortal" id="CPX-1218">
    <property type="entry name" value="Neuron-specific SWI/SNF ATP-dependent chromatin remodeling complex, ARID1B-SMARCA4 variant"/>
</dbReference>
<dbReference type="ComplexPortal" id="CPX-1220">
    <property type="entry name" value="Brain-specific SWI/SNF ATP-dependent chromatin remodeling complex, ARID1B-SMARCA2 variant"/>
</dbReference>
<dbReference type="ComplexPortal" id="CPX-1221">
    <property type="entry name" value="Brain-specific SWI/SNF ATP-dependent chromatin remodeling complex, ARID1B-SMARCA4 variant"/>
</dbReference>
<dbReference type="ComplexPortal" id="CPX-1223">
    <property type="entry name" value="Muscle cell-specific SWI/SNF ATP-dependent chromatin remodeling complex, ACTL6A-ARID1B-SMARCA2 variant"/>
</dbReference>
<dbReference type="ComplexPortal" id="CPX-1224">
    <property type="entry name" value="Muscle cell-specific SWI/SNF ATP-dependent chromatin remodeling complex, ACTL6A-ARID1B-SMARCA4 variant"/>
</dbReference>
<dbReference type="ComplexPortal" id="CPX-1227">
    <property type="entry name" value="Muscle cell-specific SWI/SNF ATP-dependent chromatin remodeling complex, ACTL6B-ARID1B-SMARCA2 variant"/>
</dbReference>
<dbReference type="ComplexPortal" id="CPX-1228">
    <property type="entry name" value="Muscle cell-specific SWI/SNF ATP-dependent chromatin remodeling complex, ACTL6B-ARID1B-SMARCA4 variant"/>
</dbReference>
<dbReference type="CORUM" id="Q8NFD5"/>
<dbReference type="FunCoup" id="Q8NFD5">
    <property type="interactions" value="4230"/>
</dbReference>
<dbReference type="IntAct" id="Q8NFD5">
    <property type="interactions" value="144"/>
</dbReference>
<dbReference type="MINT" id="Q8NFD5"/>
<dbReference type="STRING" id="9606.ENSP00000490491"/>
<dbReference type="GlyCosmos" id="Q8NFD5">
    <property type="glycosylation" value="2 sites, 1 glycan"/>
</dbReference>
<dbReference type="GlyGen" id="Q8NFD5">
    <property type="glycosylation" value="4 sites"/>
</dbReference>
<dbReference type="iPTMnet" id="Q8NFD5"/>
<dbReference type="PhosphoSitePlus" id="Q8NFD5"/>
<dbReference type="BioMuta" id="ARID1B"/>
<dbReference type="DMDM" id="73921720"/>
<dbReference type="jPOST" id="Q8NFD5"/>
<dbReference type="MassIVE" id="Q8NFD5"/>
<dbReference type="PaxDb" id="9606-ENSP00000344546"/>
<dbReference type="PeptideAtlas" id="Q8NFD5"/>
<dbReference type="ProteomicsDB" id="73289">
    <molecule id="Q8NFD5-1"/>
</dbReference>
<dbReference type="ProteomicsDB" id="73290">
    <molecule id="Q8NFD5-2"/>
</dbReference>
<dbReference type="ProteomicsDB" id="73291">
    <molecule id="Q8NFD5-3"/>
</dbReference>
<dbReference type="Pumba" id="Q8NFD5"/>
<dbReference type="Antibodypedia" id="19980">
    <property type="antibodies" value="173 antibodies from 27 providers"/>
</dbReference>
<dbReference type="DNASU" id="57492"/>
<dbReference type="Ensembl" id="ENST00000346085.10">
    <molecule id="Q8NFD5-2"/>
    <property type="protein sequence ID" value="ENSP00000344546.5"/>
    <property type="gene ID" value="ENSG00000049618.25"/>
</dbReference>
<dbReference type="Ensembl" id="ENST00000350026.11">
    <molecule id="Q8NFD5-5"/>
    <property type="protein sequence ID" value="ENSP00000055163.8"/>
    <property type="gene ID" value="ENSG00000049618.25"/>
</dbReference>
<dbReference type="Ensembl" id="ENST00000636930.2">
    <molecule id="Q8NFD5-3"/>
    <property type="protein sequence ID" value="ENSP00000490491.2"/>
    <property type="gene ID" value="ENSG00000049618.25"/>
</dbReference>
<dbReference type="GeneID" id="57492"/>
<dbReference type="KEGG" id="hsa:57492"/>
<dbReference type="MANE-Select" id="ENST00000636930.2">
    <molecule id="Q8NFD5-3"/>
    <property type="protein sequence ID" value="ENSP00000490491.2"/>
    <property type="RefSeq nucleotide sequence ID" value="NM_001374828.1"/>
    <property type="RefSeq protein sequence ID" value="NP_001361757.1"/>
</dbReference>
<dbReference type="UCSC" id="uc003qqo.4">
    <molecule id="Q8NFD5-5"/>
    <property type="organism name" value="human"/>
</dbReference>
<dbReference type="AGR" id="HGNC:18040"/>
<dbReference type="CTD" id="57492"/>
<dbReference type="DisGeNET" id="57492"/>
<dbReference type="GeneCards" id="ARID1B"/>
<dbReference type="GeneReviews" id="ARID1B"/>
<dbReference type="HGNC" id="HGNC:18040">
    <property type="gene designation" value="ARID1B"/>
</dbReference>
<dbReference type="HPA" id="ENSG00000049618">
    <property type="expression patterns" value="Low tissue specificity"/>
</dbReference>
<dbReference type="MalaCards" id="ARID1B"/>
<dbReference type="MIM" id="135900">
    <property type="type" value="phenotype"/>
</dbReference>
<dbReference type="MIM" id="614556">
    <property type="type" value="gene"/>
</dbReference>
<dbReference type="neXtProt" id="NX_Q8NFD5"/>
<dbReference type="OpenTargets" id="ENSG00000049618"/>
<dbReference type="Orphanet" id="251056">
    <property type="disease" value="6q25.2q25.3 microdeletion syndrome"/>
</dbReference>
<dbReference type="Orphanet" id="1465">
    <property type="disease" value="Coffin-Siris syndrome"/>
</dbReference>
<dbReference type="PharmGKB" id="PA134909463"/>
<dbReference type="VEuPathDB" id="HostDB:ENSG00000049618"/>
<dbReference type="eggNOG" id="KOG2510">
    <property type="taxonomic scope" value="Eukaryota"/>
</dbReference>
<dbReference type="GeneTree" id="ENSGT00940000155634"/>
<dbReference type="InParanoid" id="Q8NFD5"/>
<dbReference type="OMA" id="CTTSSWQ"/>
<dbReference type="OrthoDB" id="8709537at2759"/>
<dbReference type="PAN-GO" id="Q8NFD5">
    <property type="GO annotations" value="6 GO annotations based on evolutionary models"/>
</dbReference>
<dbReference type="PhylomeDB" id="Q8NFD5"/>
<dbReference type="TreeFam" id="TF320364"/>
<dbReference type="PathwayCommons" id="Q8NFD5"/>
<dbReference type="Reactome" id="R-HSA-3214858">
    <property type="pathway name" value="RMTs methylate histone arginines"/>
</dbReference>
<dbReference type="Reactome" id="R-HSA-8939243">
    <property type="pathway name" value="RUNX1 interacts with co-factors whose precise effect on RUNX1 targets is not known"/>
</dbReference>
<dbReference type="Reactome" id="R-HSA-9824585">
    <property type="pathway name" value="Regulation of MITF-M-dependent genes involved in pigmentation"/>
</dbReference>
<dbReference type="Reactome" id="R-HSA-9845323">
    <property type="pathway name" value="Regulation of endogenous retroelements by Piwi-interacting RNAs (piRNAs)"/>
</dbReference>
<dbReference type="SignaLink" id="Q8NFD5"/>
<dbReference type="SIGNOR" id="Q8NFD5"/>
<dbReference type="BioGRID-ORCS" id="57492">
    <property type="hits" value="42 hits in 1196 CRISPR screens"/>
</dbReference>
<dbReference type="CD-CODE" id="4749EA78">
    <property type="entry name" value="cBAF condensate"/>
</dbReference>
<dbReference type="ChiTaRS" id="ARID1B">
    <property type="organism name" value="human"/>
</dbReference>
<dbReference type="EvolutionaryTrace" id="Q8NFD5"/>
<dbReference type="GeneWiki" id="ARID1B"/>
<dbReference type="GenomeRNAi" id="57492"/>
<dbReference type="Pharos" id="Q8NFD5">
    <property type="development level" value="Tbio"/>
</dbReference>
<dbReference type="PRO" id="PR:Q8NFD5"/>
<dbReference type="Proteomes" id="UP000005640">
    <property type="component" value="Chromosome 6"/>
</dbReference>
<dbReference type="RNAct" id="Q8NFD5">
    <property type="molecule type" value="protein"/>
</dbReference>
<dbReference type="Bgee" id="ENSG00000049618">
    <property type="expression patterns" value="Expressed in bone marrow cell and 204 other cell types or tissues"/>
</dbReference>
<dbReference type="ExpressionAtlas" id="Q8NFD5">
    <property type="expression patterns" value="baseline and differential"/>
</dbReference>
<dbReference type="GO" id="GO:0140092">
    <property type="term" value="C:bBAF complex"/>
    <property type="evidence" value="ECO:0000303"/>
    <property type="project" value="ComplexPortal"/>
</dbReference>
<dbReference type="GO" id="GO:0035060">
    <property type="term" value="C:brahma complex"/>
    <property type="evidence" value="ECO:0000303"/>
    <property type="project" value="ComplexPortal"/>
</dbReference>
<dbReference type="GO" id="GO:0000785">
    <property type="term" value="C:chromatin"/>
    <property type="evidence" value="ECO:0000303"/>
    <property type="project" value="ComplexPortal"/>
</dbReference>
<dbReference type="GO" id="GO:0005829">
    <property type="term" value="C:cytosol"/>
    <property type="evidence" value="ECO:0000314"/>
    <property type="project" value="HPA"/>
</dbReference>
<dbReference type="GO" id="GO:0071565">
    <property type="term" value="C:nBAF complex"/>
    <property type="evidence" value="ECO:0000318"/>
    <property type="project" value="GO_Central"/>
</dbReference>
<dbReference type="GO" id="GO:0071564">
    <property type="term" value="C:npBAF complex"/>
    <property type="evidence" value="ECO:0000303"/>
    <property type="project" value="ComplexPortal"/>
</dbReference>
<dbReference type="GO" id="GO:0005654">
    <property type="term" value="C:nucleoplasm"/>
    <property type="evidence" value="ECO:0000314"/>
    <property type="project" value="HPA"/>
</dbReference>
<dbReference type="GO" id="GO:0005886">
    <property type="term" value="C:plasma membrane"/>
    <property type="evidence" value="ECO:0000314"/>
    <property type="project" value="HPA"/>
</dbReference>
<dbReference type="GO" id="GO:0016514">
    <property type="term" value="C:SWI/SNF complex"/>
    <property type="evidence" value="ECO:0000314"/>
    <property type="project" value="UniProtKB"/>
</dbReference>
<dbReference type="GO" id="GO:0003677">
    <property type="term" value="F:DNA binding"/>
    <property type="evidence" value="ECO:0000314"/>
    <property type="project" value="GDB"/>
</dbReference>
<dbReference type="GO" id="GO:0003713">
    <property type="term" value="F:transcription coactivator activity"/>
    <property type="evidence" value="ECO:0000303"/>
    <property type="project" value="UniProtKB"/>
</dbReference>
<dbReference type="GO" id="GO:0006338">
    <property type="term" value="P:chromatin remodeling"/>
    <property type="evidence" value="ECO:0000303"/>
    <property type="project" value="ComplexPortal"/>
</dbReference>
<dbReference type="GO" id="GO:0007399">
    <property type="term" value="P:nervous system development"/>
    <property type="evidence" value="ECO:0007669"/>
    <property type="project" value="UniProtKB-KW"/>
</dbReference>
<dbReference type="GO" id="GO:0045597">
    <property type="term" value="P:positive regulation of cell differentiation"/>
    <property type="evidence" value="ECO:0000303"/>
    <property type="project" value="ComplexPortal"/>
</dbReference>
<dbReference type="GO" id="GO:0045893">
    <property type="term" value="P:positive regulation of DNA-templated transcription"/>
    <property type="evidence" value="ECO:0000318"/>
    <property type="project" value="GO_Central"/>
</dbReference>
<dbReference type="GO" id="GO:2000781">
    <property type="term" value="P:positive regulation of double-strand break repair"/>
    <property type="evidence" value="ECO:0000303"/>
    <property type="project" value="ComplexPortal"/>
</dbReference>
<dbReference type="GO" id="GO:0045663">
    <property type="term" value="P:positive regulation of myoblast differentiation"/>
    <property type="evidence" value="ECO:0000303"/>
    <property type="project" value="ComplexPortal"/>
</dbReference>
<dbReference type="GO" id="GO:0045582">
    <property type="term" value="P:positive regulation of T cell differentiation"/>
    <property type="evidence" value="ECO:0000303"/>
    <property type="project" value="ComplexPortal"/>
</dbReference>
<dbReference type="GO" id="GO:0070316">
    <property type="term" value="P:regulation of G0 to G1 transition"/>
    <property type="evidence" value="ECO:0000303"/>
    <property type="project" value="ComplexPortal"/>
</dbReference>
<dbReference type="GO" id="GO:2000045">
    <property type="term" value="P:regulation of G1/S transition of mitotic cell cycle"/>
    <property type="evidence" value="ECO:0000303"/>
    <property type="project" value="ComplexPortal"/>
</dbReference>
<dbReference type="GO" id="GO:0030071">
    <property type="term" value="P:regulation of mitotic metaphase/anaphase transition"/>
    <property type="evidence" value="ECO:0000303"/>
    <property type="project" value="ComplexPortal"/>
</dbReference>
<dbReference type="GO" id="GO:2000819">
    <property type="term" value="P:regulation of nucleotide-excision repair"/>
    <property type="evidence" value="ECO:0000303"/>
    <property type="project" value="ComplexPortal"/>
</dbReference>
<dbReference type="GO" id="GO:0006357">
    <property type="term" value="P:regulation of transcription by RNA polymerase II"/>
    <property type="evidence" value="ECO:0000318"/>
    <property type="project" value="GO_Central"/>
</dbReference>
<dbReference type="GO" id="GO:0045815">
    <property type="term" value="P:transcription initiation-coupled chromatin remodeling"/>
    <property type="evidence" value="ECO:0000303"/>
    <property type="project" value="UniProtKB"/>
</dbReference>
<dbReference type="CDD" id="cd16877">
    <property type="entry name" value="ARID_ARID1B"/>
    <property type="match status" value="1"/>
</dbReference>
<dbReference type="FunFam" id="1.10.150.60:FF:000002">
    <property type="entry name" value="AT-rich interactive domain-containing protein 1B"/>
    <property type="match status" value="1"/>
</dbReference>
<dbReference type="Gene3D" id="1.10.150.60">
    <property type="entry name" value="ARID DNA-binding domain"/>
    <property type="match status" value="1"/>
</dbReference>
<dbReference type="InterPro" id="IPR038040">
    <property type="entry name" value="ARID_ARID1B"/>
</dbReference>
<dbReference type="InterPro" id="IPR001606">
    <property type="entry name" value="ARID_dom"/>
</dbReference>
<dbReference type="InterPro" id="IPR036431">
    <property type="entry name" value="ARID_dom_sf"/>
</dbReference>
<dbReference type="InterPro" id="IPR021906">
    <property type="entry name" value="BAF250/Osa"/>
</dbReference>
<dbReference type="InterPro" id="IPR033388">
    <property type="entry name" value="BAF250_C"/>
</dbReference>
<dbReference type="PANTHER" id="PTHR12656:SF11">
    <property type="entry name" value="AT-RICH INTERACTIVE DOMAIN-CONTAINING PROTEIN 1B"/>
    <property type="match status" value="1"/>
</dbReference>
<dbReference type="PANTHER" id="PTHR12656">
    <property type="entry name" value="BRG-1 ASSOCIATED FACTOR 250 BAF250"/>
    <property type="match status" value="1"/>
</dbReference>
<dbReference type="Pfam" id="PF01388">
    <property type="entry name" value="ARID"/>
    <property type="match status" value="1"/>
</dbReference>
<dbReference type="Pfam" id="PF12031">
    <property type="entry name" value="BAF250_C"/>
    <property type="match status" value="1"/>
</dbReference>
<dbReference type="SMART" id="SM01014">
    <property type="entry name" value="ARID"/>
    <property type="match status" value="1"/>
</dbReference>
<dbReference type="SMART" id="SM00501">
    <property type="entry name" value="BRIGHT"/>
    <property type="match status" value="1"/>
</dbReference>
<dbReference type="SUPFAM" id="SSF46774">
    <property type="entry name" value="ARID-like"/>
    <property type="match status" value="1"/>
</dbReference>
<dbReference type="PROSITE" id="PS51011">
    <property type="entry name" value="ARID"/>
    <property type="match status" value="1"/>
</dbReference>
<protein>
    <recommendedName>
        <fullName evidence="20">AT-rich interactive domain-containing protein 1B</fullName>
        <shortName>ARID domain-containing protein 1B</shortName>
    </recommendedName>
    <alternativeName>
        <fullName>BRG1-associated factor 250b</fullName>
        <shortName>BAF250B</shortName>
    </alternativeName>
    <alternativeName>
        <fullName>BRG1-binding protein hELD/OSA1</fullName>
    </alternativeName>
    <alternativeName>
        <fullName>Osa homolog 2</fullName>
        <shortName>hOsa2</shortName>
    </alternativeName>
    <alternativeName>
        <fullName>p250R</fullName>
    </alternativeName>
</protein>
<comment type="function">
    <text evidence="1 8 9 17 18 19">Involved in transcriptional activation and repression of select genes by chromatin remodeling (alteration of DNA-nucleosome topology). Component of SWI/SNF chromatin remodeling complexes that carry out key enzymatic activities, changing chromatin structure by altering DNA-histone contacts within a nucleosome in an ATP-dependent manner. Belongs to the neural progenitors-specific chromatin remodeling complex (npBAF complex) and the neuron-specific chromatin remodeling complex (nBAF complex). During neural development a switch from a stem/progenitor to a postmitotic chromatin remodeling mechanism occurs as neurons exit the cell cycle and become committed to their adult state. The transition from proliferating neural stem/progenitor cells to postmitotic neurons requires a switch in subunit composition of the npBAF and nBAF complexes. As neural progenitors exit mitosis and differentiate into neurons, npBAF complexes which contain ACTL6A/BAF53A and PHF10/BAF45A, are exchanged for homologous alternative ACTL6B/BAF53B and DPF1/BAF45B or DPF3/BAF45C subunits in neuron-specific complexes (nBAF). The npBAF complex is essential for the self-renewal/proliferative capacity of the multipotent neural stem cells. The nBAF complex along with CREST plays a role regulating the activity of genes essential for dendrite growth (By similarity). Binds DNA non-specifically (PubMed:14982958, PubMed:15170388).</text>
</comment>
<comment type="subunit">
    <text evidence="1 5 6 7 9 11 17 18 19">Component of SWI/SNF chromatin remodeling complexes, in some of which it can be mutually exclusive with ARID1B/BAF250B (PubMed:11988099, PubMed:12200431, PubMed:12672490, PubMed:15170388, PubMed:22952240, PubMed:26601204). The canonical complex contains a catalytic subunit (either SMARCA4/BRG1/BAF190A or SMARCA2/BRM/BAF190B) and at least SMARCE1, ACTL6A/BAF53, SMARCC1/BAF155, SMARCC2/BAF170, and SMARCB1/SNF5/BAF47. Other subunits specific to each of the complexes may also be present permitting several possible combinations developmentally and tissue specific (PubMed:11734557, PubMed:22952240, PubMed:26601204). Component of the BAF (SWI/SNF-A) complex, which includes at least actin (ACTB), ARID1A/BAF250A, ARID1B/BAF250B, SMARCA2/BRM, SMARCA4/BRG1/BAF190A, ACTL6A/BAF53, ACTL6B/BAF53B, SMARCE1/BAF57, SMARCC1/BAF155, SMARCC2/BAF170, SMARCB1/SNF5/INI1, and one or more SMARCD1/BAF60A, SMARCD2/BAF60B, or SMARCD3/BAF60C (PubMed:18765789). In muscle cells, the BAF complex also contains DPF3. Component of neural progenitors-specific chromatin remodeling complex (npBAF complex) composed of at least, ARID1A/BAF250A or ARID1B/BAF250B, SMARCD1/BAF60A, SMARCD3/BAF60C, SMARCA2/BRM/BAF190B, SMARCA4/BRG1/BAF190A, SMARCB1/BAF47, SMARCC1/BAF155, SMARCE1/BAF57, SMARCC2/BAF170, PHF10/BAF45A, ACTL6A/BAF53A and actin. Component of neuron-specific chromatin remodeling complex (nBAF complex) composed of at least, ARID1A/BAF250A or ARID1B/BAF250B, SMARCD1/BAF60A, SMARCD3/BAF60C, SMARCA2/BRM/BAF190B, SMARCA4/BRG1/BAF190A, SMARCB1/BAF47, SMARCC1/BAF155, SMARCE1/BAF57, SMARCC2/BAF170, DPF1/BAF45B, DPF3/BAF45C, ACTL6B/BAF53B and actin (By similarity). Component of a SWI/SNF-like EBAFb complex, at least composed of SMARCA4/BRG1/BAF190A, SMARCB1/BAF47/SNF5, ACTL6A/BAF53A, SMARCE1/BAF57, SMARCD1/BAF60A, SMARCD2/BAF60B, SMARCC1/BAF155, SMARCC2/BAF170, ARID1B/BAF250B, MLLT1/ENL and actin (PubMed:12665591). Interacts through its C-terminus with SMARCA2/BRM/BAF190B and SMARCA4/BRG1/BAF190A (PubMed:11988099, PubMed:12200431, PubMed:15170388). Interacts with SMARCC1/BAF155 (PubMed:15170388).</text>
</comment>
<comment type="interaction">
    <interactant intactId="EBI-679921">
        <id>Q8NFD5</id>
    </interactant>
    <interactant intactId="EBI-1104711">
        <id>Q16555</id>
        <label>DPYSL2</label>
    </interactant>
    <organismsDiffer>false</organismsDiffer>
    <experiments>2</experiments>
</comment>
<comment type="interaction">
    <interactant intactId="EBI-679921">
        <id>Q8NFD5</id>
    </interactant>
    <interactant intactId="EBI-679562">
        <id>P51531</id>
        <label>SMARCA2</label>
    </interactant>
    <organismsDiffer>false</organismsDiffer>
    <experiments>4</experiments>
</comment>
<comment type="interaction">
    <interactant intactId="EBI-679921">
        <id>Q8NFD5</id>
    </interactant>
    <interactant intactId="EBI-302489">
        <id>P51532</id>
        <label>SMARCA4</label>
    </interactant>
    <organismsDiffer>false</organismsDiffer>
    <experiments>5</experiments>
</comment>
<comment type="interaction">
    <interactant intactId="EBI-679921">
        <id>Q8NFD5</id>
    </interactant>
    <interactant intactId="EBI-357418">
        <id>Q8TAQ2</id>
        <label>SMARCC2</label>
    </interactant>
    <organismsDiffer>false</organismsDiffer>
    <experiments>6</experiments>
</comment>
<comment type="subcellular location">
    <subcellularLocation>
        <location evidence="3 5">Nucleus</location>
    </subcellularLocation>
</comment>
<comment type="alternative products">
    <event type="alternative splicing"/>
    <event type="alternative initiation"/>
    <isoform>
        <id>Q8NFD5-5</id>
        <name>5</name>
        <sequence type="displayed"/>
    </isoform>
    <isoform>
        <id>Q8NFD5-1</id>
        <name>1</name>
        <sequence type="described" ref="VSP_061510"/>
    </isoform>
    <isoform>
        <id>Q8NFD5-2</id>
        <name>2</name>
        <sequence type="described" ref="VSP_061511"/>
    </isoform>
    <isoform>
        <id>Q8NFD5-3</id>
        <name>3</name>
        <sequence type="described" ref="VSP_061512"/>
    </isoform>
</comment>
<comment type="tissue specificity">
    <text evidence="5 6 7">Widely expressed with high levels in heart, skeletal muscle and kidney.</text>
</comment>
<comment type="polymorphism">
    <text>The poly-Gln region is polymorphic and the number of Gln varies in the population (from 17 to 23).</text>
</comment>
<comment type="disease" evidence="12 13 14">
    <disease id="DI-04692">
        <name>Coffin-Siris syndrome 1</name>
        <acronym>CSS1</acronym>
        <description>A form of Coffin-Siris syndrome, a congenital multiple malformation syndrome with broad phenotypic and genetic variability. Cardinal features are intellectual disability, coarse facial features, hypertrichosis, and hypoplastic or absent fifth digit nails or phalanges. Additional features include malformations of the cardiac, gastrointestinal, genitourinary, and/or central nervous systems. Sucking/feeding difficulties, poor growth, ophthalmologic abnormalities, hearing impairment, and spinal anomalies are common findings. Both autosomal dominant and autosomal recessive inheritance patterns have been reported.</description>
        <dbReference type="MIM" id="135900"/>
    </disease>
    <text>The disease is caused by variants affecting the gene represented in this entry.</text>
</comment>
<comment type="miscellaneous">
    <molecule>Isoform 1</molecule>
    <text evidence="20">Produced by alternative initiation at Met-84 of isoform 5.</text>
</comment>
<comment type="sequence caution" evidence="20">
    <conflict type="erroneous initiation">
        <sequence resource="EMBL-CDS" id="AAG36928"/>
    </conflict>
    <text>Truncated N-terminus.</text>
</comment>
<comment type="sequence caution" evidence="20">
    <conflict type="erroneous initiation">
        <sequence resource="EMBL-CDS" id="AAL76077"/>
    </conflict>
    <text>Truncated N-terminus.</text>
</comment>
<comment type="sequence caution" evidence="20">
    <conflict type="frameshift">
        <sequence resource="EMBL-CDS" id="AAN03447"/>
    </conflict>
</comment>
<comment type="sequence caution" evidence="20">
    <conflict type="erroneous initiation">
        <sequence resource="EMBL-CDS" id="AAN70985"/>
    </conflict>
    <text>Truncated N-terminus.</text>
</comment>
<comment type="sequence caution" evidence="20">
    <conflict type="frameshift">
        <sequence resource="EMBL-CDS" id="AAN70985"/>
    </conflict>
</comment>
<comment type="sequence caution" evidence="20">
    <conflict type="frameshift">
        <sequence resource="EMBL-CDS" id="CAA69592"/>
    </conflict>
</comment>
<name>ARI1B_HUMAN</name>
<accession>Q8NFD5</accession>
<accession>Q5JRD1</accession>
<accession>Q5VYC4</accession>
<accession>Q8IZY8</accession>
<accession>Q8TEV0</accession>
<accession>Q8TF02</accession>
<accession>Q99491</accession>
<accession>Q9ULI5</accession>
<reference key="1">
    <citation type="journal article" date="2003" name="Nature">
        <title>The DNA sequence and analysis of human chromosome 6.</title>
        <authorList>
            <person name="Mungall A.J."/>
            <person name="Palmer S.A."/>
            <person name="Sims S.K."/>
            <person name="Edwards C.A."/>
            <person name="Ashurst J.L."/>
            <person name="Wilming L."/>
            <person name="Jones M.C."/>
            <person name="Horton R."/>
            <person name="Hunt S.E."/>
            <person name="Scott C.E."/>
            <person name="Gilbert J.G.R."/>
            <person name="Clamp M.E."/>
            <person name="Bethel G."/>
            <person name="Milne S."/>
            <person name="Ainscough R."/>
            <person name="Almeida J.P."/>
            <person name="Ambrose K.D."/>
            <person name="Andrews T.D."/>
            <person name="Ashwell R.I.S."/>
            <person name="Babbage A.K."/>
            <person name="Bagguley C.L."/>
            <person name="Bailey J."/>
            <person name="Banerjee R."/>
            <person name="Barker D.J."/>
            <person name="Barlow K.F."/>
            <person name="Bates K."/>
            <person name="Beare D.M."/>
            <person name="Beasley H."/>
            <person name="Beasley O."/>
            <person name="Bird C.P."/>
            <person name="Blakey S.E."/>
            <person name="Bray-Allen S."/>
            <person name="Brook J."/>
            <person name="Brown A.J."/>
            <person name="Brown J.Y."/>
            <person name="Burford D.C."/>
            <person name="Burrill W."/>
            <person name="Burton J."/>
            <person name="Carder C."/>
            <person name="Carter N.P."/>
            <person name="Chapman J.C."/>
            <person name="Clark S.Y."/>
            <person name="Clark G."/>
            <person name="Clee C.M."/>
            <person name="Clegg S."/>
            <person name="Cobley V."/>
            <person name="Collier R.E."/>
            <person name="Collins J.E."/>
            <person name="Colman L.K."/>
            <person name="Corby N.R."/>
            <person name="Coville G.J."/>
            <person name="Culley K.M."/>
            <person name="Dhami P."/>
            <person name="Davies J."/>
            <person name="Dunn M."/>
            <person name="Earthrowl M.E."/>
            <person name="Ellington A.E."/>
            <person name="Evans K.A."/>
            <person name="Faulkner L."/>
            <person name="Francis M.D."/>
            <person name="Frankish A."/>
            <person name="Frankland J."/>
            <person name="French L."/>
            <person name="Garner P."/>
            <person name="Garnett J."/>
            <person name="Ghori M.J."/>
            <person name="Gilby L.M."/>
            <person name="Gillson C.J."/>
            <person name="Glithero R.J."/>
            <person name="Grafham D.V."/>
            <person name="Grant M."/>
            <person name="Gribble S."/>
            <person name="Griffiths C."/>
            <person name="Griffiths M.N.D."/>
            <person name="Hall R."/>
            <person name="Halls K.S."/>
            <person name="Hammond S."/>
            <person name="Harley J.L."/>
            <person name="Hart E.A."/>
            <person name="Heath P.D."/>
            <person name="Heathcott R."/>
            <person name="Holmes S.J."/>
            <person name="Howden P.J."/>
            <person name="Howe K.L."/>
            <person name="Howell G.R."/>
            <person name="Huckle E."/>
            <person name="Humphray S.J."/>
            <person name="Humphries M.D."/>
            <person name="Hunt A.R."/>
            <person name="Johnson C.M."/>
            <person name="Joy A.A."/>
            <person name="Kay M."/>
            <person name="Keenan S.J."/>
            <person name="Kimberley A.M."/>
            <person name="King A."/>
            <person name="Laird G.K."/>
            <person name="Langford C."/>
            <person name="Lawlor S."/>
            <person name="Leongamornlert D.A."/>
            <person name="Leversha M."/>
            <person name="Lloyd C.R."/>
            <person name="Lloyd D.M."/>
            <person name="Loveland J.E."/>
            <person name="Lovell J."/>
            <person name="Martin S."/>
            <person name="Mashreghi-Mohammadi M."/>
            <person name="Maslen G.L."/>
            <person name="Matthews L."/>
            <person name="McCann O.T."/>
            <person name="McLaren S.J."/>
            <person name="McLay K."/>
            <person name="McMurray A."/>
            <person name="Moore M.J.F."/>
            <person name="Mullikin J.C."/>
            <person name="Niblett D."/>
            <person name="Nickerson T."/>
            <person name="Novik K.L."/>
            <person name="Oliver K."/>
            <person name="Overton-Larty E.K."/>
            <person name="Parker A."/>
            <person name="Patel R."/>
            <person name="Pearce A.V."/>
            <person name="Peck A.I."/>
            <person name="Phillimore B.J.C.T."/>
            <person name="Phillips S."/>
            <person name="Plumb R.W."/>
            <person name="Porter K.M."/>
            <person name="Ramsey Y."/>
            <person name="Ranby S.A."/>
            <person name="Rice C.M."/>
            <person name="Ross M.T."/>
            <person name="Searle S.M."/>
            <person name="Sehra H.K."/>
            <person name="Sheridan E."/>
            <person name="Skuce C.D."/>
            <person name="Smith S."/>
            <person name="Smith M."/>
            <person name="Spraggon L."/>
            <person name="Squares S.L."/>
            <person name="Steward C.A."/>
            <person name="Sycamore N."/>
            <person name="Tamlyn-Hall G."/>
            <person name="Tester J."/>
            <person name="Theaker A.J."/>
            <person name="Thomas D.W."/>
            <person name="Thorpe A."/>
            <person name="Tracey A."/>
            <person name="Tromans A."/>
            <person name="Tubby B."/>
            <person name="Wall M."/>
            <person name="Wallis J.M."/>
            <person name="West A.P."/>
            <person name="White S.S."/>
            <person name="Whitehead S.L."/>
            <person name="Whittaker H."/>
            <person name="Wild A."/>
            <person name="Willey D.J."/>
            <person name="Wilmer T.E."/>
            <person name="Wood J.M."/>
            <person name="Wray P.W."/>
            <person name="Wyatt J.C."/>
            <person name="Young L."/>
            <person name="Younger R.M."/>
            <person name="Bentley D.R."/>
            <person name="Coulson A."/>
            <person name="Durbin R.M."/>
            <person name="Hubbard T."/>
            <person name="Sulston J.E."/>
            <person name="Dunham I."/>
            <person name="Rogers J."/>
            <person name="Beck S."/>
        </authorList>
    </citation>
    <scope>NUCLEOTIDE SEQUENCE [LARGE SCALE GENOMIC DNA]</scope>
</reference>
<reference key="2">
    <citation type="journal article" date="1998" name="J. Biol. Chem.">
        <title>New 5'-(CGG)-3' repeats in the human genome.</title>
        <authorList>
            <person name="Mangel L."/>
            <person name="Ternes T."/>
            <person name="Schmitz B."/>
            <person name="Doerfler W."/>
        </authorList>
    </citation>
    <scope>NUCLEOTIDE SEQUENCE [GENOMIC DNA] OF 1-597 (ISOFORM 5)</scope>
</reference>
<reference key="3">
    <citation type="journal article" date="1996" name="Nat. Genet.">
        <title>Cloning of the gene for spinocerebellar ataxia 2 reveals a locus with high sensitivity to expanded CAG/glutamine repeats.</title>
        <authorList>
            <person name="Imbert G."/>
            <person name="Saudou F."/>
            <person name="Yvert G."/>
            <person name="Devys D."/>
            <person name="Trottier Y."/>
            <person name="Garnier J.-M."/>
            <person name="Weber C."/>
            <person name="Mandel J.-L."/>
            <person name="Cancel G."/>
            <person name="Abbas N."/>
            <person name="Duerr A."/>
            <person name="Didierjean O."/>
            <person name="Stevanin G."/>
            <person name="Agid Y."/>
            <person name="Brice A."/>
        </authorList>
    </citation>
    <scope>NUCLEOTIDE SEQUENCE [MRNA] OF 92-281</scope>
</reference>
<reference key="4">
    <citation type="journal article" date="2002" name="J. Biol. Chem.">
        <title>Largest subunits of the human SWI/SNF chromatin-remodeling complex promote transcriptional activation by steroid hormone receptors.</title>
        <authorList>
            <person name="Inoue H."/>
            <person name="Furukawa T."/>
            <person name="Giannakopoulos S."/>
            <person name="Zhou S."/>
            <person name="King D.S."/>
            <person name="Tanese N."/>
        </authorList>
    </citation>
    <scope>NUCLEOTIDE SEQUENCE [MRNA] OF 155-2319 (ISOFORM 5)</scope>
    <scope>TISSUE SPECIFICITY</scope>
    <scope>INTERACTION WITH SMARCA2 AND SMARCA4</scope>
    <scope>IDENTIFICATION IN A SWI/SNF-LIKE COMPLEX WITH ARID1A</scope>
</reference>
<reference key="5">
    <citation type="journal article" date="2003" name="Mol. Cell. Biol.">
        <title>Novel SWI/SNF chromatin-remodeling complexes contain a mixed-lineage leukemia chromosomal translocation partner.</title>
        <authorList>
            <person name="Nie Z."/>
            <person name="Yan Z."/>
            <person name="Chen E.H."/>
            <person name="Sechi S."/>
            <person name="Ling C."/>
            <person name="Zhou S."/>
            <person name="Xue Y."/>
            <person name="Yang D."/>
            <person name="Murray D."/>
            <person name="Kanakubo E."/>
            <person name="Cleary M.L."/>
            <person name="Wang W."/>
        </authorList>
    </citation>
    <scope>NUCLEOTIDE SEQUENCE [MRNA] OF 353-2319 (ISOFORM 5)</scope>
    <scope>TISSUE SPECIFICITY</scope>
    <scope>IDENTIFICATION BY MASS SPECTROMETRY</scope>
    <scope>IDENTIFICATION IN A SWI/SNF-LIKE EBAFB COMPLEX</scope>
</reference>
<reference key="6">
    <citation type="journal article" date="2002" name="Biochem. J.">
        <title>Cloning and characterization of hELD/OSA1, a novel BRG1 interacting protein.</title>
        <authorList>
            <person name="Hurlstone A.F."/>
            <person name="Olave I.A."/>
            <person name="Barker N."/>
            <person name="van Noort M."/>
            <person name="Clevers H."/>
        </authorList>
    </citation>
    <scope>NUCLEOTIDE SEQUENCE [MRNA] OF 574-2319 (ISOFORM 2)</scope>
    <scope>SUBCELLULAR LOCATION</scope>
    <scope>TISSUE SPECIFICITY</scope>
    <scope>INTERACTION WITH SMARCA4</scope>
    <scope>IDENTIFICATION IN A COMPLEX WITH SMARCA4 AND SMARCD1</scope>
    <scope>IDENTIFICATION IN A SWI/SNF-LIKE COMPLEX WITH ARID1A</scope>
</reference>
<reference key="7">
    <citation type="journal article" date="2002" name="J. Biol. Chem.">
        <title>SYT associates with human SNF/SWI complexes and the C-terminal region of its fusion partner SSX1 targets histones.</title>
        <authorList>
            <person name="Kato H."/>
            <person name="Tjernberg A."/>
            <person name="Zhang W."/>
            <person name="Krutchinsky A.N."/>
            <person name="An W."/>
            <person name="Takeuchi T."/>
            <person name="Ohtsuki Y."/>
            <person name="Sugano S."/>
            <person name="de Bruijn D.R."/>
            <person name="Chait B.T."/>
            <person name="Roeder R.G."/>
        </authorList>
    </citation>
    <scope>NUCLEOTIDE SEQUENCE [MRNA] OF 788-2319 (ISOFORM 5)</scope>
    <scope>IDENTIFICATION IN SWI/SNF COMPLEXES</scope>
    <source>
        <tissue>Brain</tissue>
    </source>
</reference>
<reference key="8">
    <citation type="journal article" date="1999" name="DNA Res.">
        <title>Prediction of the coding sequences of unidentified human genes. XV. The complete sequences of 100 new cDNA clones from brain which code for large proteins in vitro.</title>
        <authorList>
            <person name="Nagase T."/>
            <person name="Ishikawa K."/>
            <person name="Kikuno R."/>
            <person name="Hirosawa M."/>
            <person name="Nomura N."/>
            <person name="Ohara O."/>
        </authorList>
    </citation>
    <scope>NUCLEOTIDE SEQUENCE [LARGE SCALE MRNA] OF 888-2319 (ISOFORM 3)</scope>
    <source>
        <tissue>Brain</tissue>
    </source>
</reference>
<reference key="9">
    <citation type="journal article" date="2008" name="Proc. Natl. Acad. Sci. U.S.A.">
        <title>A quantitative atlas of mitotic phosphorylation.</title>
        <authorList>
            <person name="Dephoure N."/>
            <person name="Zhou C."/>
            <person name="Villen J."/>
            <person name="Beausoleil S.A."/>
            <person name="Bakalarski C.E."/>
            <person name="Elledge S.J."/>
            <person name="Gygi S.P."/>
        </authorList>
    </citation>
    <scope>PHOSPHORYLATION [LARGE SCALE ANALYSIS] AT SER-599; SER-1638 AND SER-1642</scope>
    <scope>IDENTIFICATION BY MASS SPECTROMETRY [LARGE SCALE ANALYSIS]</scope>
    <source>
        <tissue>Cervix carcinoma</tissue>
    </source>
</reference>
<reference key="10">
    <citation type="journal article" date="2009" name="Anal. Chem.">
        <title>Lys-N and trypsin cover complementary parts of the phosphoproteome in a refined SCX-based approach.</title>
        <authorList>
            <person name="Gauci S."/>
            <person name="Helbig A.O."/>
            <person name="Slijper M."/>
            <person name="Krijgsveld J."/>
            <person name="Heck A.J."/>
            <person name="Mohammed S."/>
        </authorList>
    </citation>
    <scope>ACETYLATION [LARGE SCALE ANALYSIS] AT ALA-2 (ISOFORM 1)</scope>
    <scope>CLEAVAGE OF INITIATOR METHIONINE [LARGE SCALE ANALYSIS]</scope>
    <scope>IDENTIFICATION BY MASS SPECTROMETRY [LARGE SCALE ANALYSIS]</scope>
</reference>
<reference key="11">
    <citation type="journal article" date="2009" name="Sci. Signal.">
        <title>Quantitative phosphoproteomic analysis of T cell receptor signaling reveals system-wide modulation of protein-protein interactions.</title>
        <authorList>
            <person name="Mayya V."/>
            <person name="Lundgren D.H."/>
            <person name="Hwang S.-I."/>
            <person name="Rezaul K."/>
            <person name="Wu L."/>
            <person name="Eng J.K."/>
            <person name="Rodionov V."/>
            <person name="Han D.K."/>
        </authorList>
    </citation>
    <scope>IDENTIFICATION BY MASS SPECTROMETRY [LARGE SCALE ANALYSIS]</scope>
    <source>
        <tissue>Leukemic T-cell</tissue>
    </source>
</reference>
<reference key="12">
    <citation type="journal article" date="2009" name="Science">
        <title>Lysine acetylation targets protein complexes and co-regulates major cellular functions.</title>
        <authorList>
            <person name="Choudhary C."/>
            <person name="Kumar C."/>
            <person name="Gnad F."/>
            <person name="Nielsen M.L."/>
            <person name="Rehman M."/>
            <person name="Walther T.C."/>
            <person name="Olsen J.V."/>
            <person name="Mann M."/>
        </authorList>
    </citation>
    <scope>ACETYLATION [LARGE SCALE ANALYSIS] AT LYS-1860</scope>
    <scope>IDENTIFICATION BY MASS SPECTROMETRY [LARGE SCALE ANALYSIS]</scope>
</reference>
<reference key="13">
    <citation type="journal article" date="2010" name="Sci. Signal.">
        <title>Quantitative phosphoproteomics reveals widespread full phosphorylation site occupancy during mitosis.</title>
        <authorList>
            <person name="Olsen J.V."/>
            <person name="Vermeulen M."/>
            <person name="Santamaria A."/>
            <person name="Kumar C."/>
            <person name="Miller M.L."/>
            <person name="Jensen L.J."/>
            <person name="Gnad F."/>
            <person name="Cox J."/>
            <person name="Jensen T.S."/>
            <person name="Nigg E.A."/>
            <person name="Brunak S."/>
            <person name="Mann M."/>
        </authorList>
    </citation>
    <scope>PHOSPHORYLATION [LARGE SCALE ANALYSIS] AT SER-1638 AND SER-1642</scope>
    <scope>IDENTIFICATION BY MASS SPECTROMETRY [LARGE SCALE ANALYSIS]</scope>
    <source>
        <tissue>Cervix carcinoma</tissue>
    </source>
</reference>
<reference key="14">
    <citation type="journal article" date="2011" name="Sci. Signal.">
        <title>System-wide temporal characterization of the proteome and phosphoproteome of human embryonic stem cell differentiation.</title>
        <authorList>
            <person name="Rigbolt K.T."/>
            <person name="Prokhorova T.A."/>
            <person name="Akimov V."/>
            <person name="Henningsen J."/>
            <person name="Johansen P.T."/>
            <person name="Kratchmarova I."/>
            <person name="Kassem M."/>
            <person name="Mann M."/>
            <person name="Olsen J.V."/>
            <person name="Blagoev B."/>
        </authorList>
    </citation>
    <scope>PHOSPHORYLATION [LARGE SCALE ANALYSIS] AT SER-1638 AND SER-1798</scope>
    <scope>IDENTIFICATION BY MASS SPECTROMETRY [LARGE SCALE ANALYSIS]</scope>
</reference>
<reference key="15">
    <citation type="journal article" date="2012" name="Am. J. Hum. Genet.">
        <title>Haploinsufficiency of ARID1B, a member of the SWI/SNF-a chromatin-remodeling complex, is a frequent cause of intellectual disability.</title>
        <authorList>
            <person name="Hoyer J."/>
            <person name="Ekici A.B."/>
            <person name="Endele S."/>
            <person name="Popp B."/>
            <person name="Zweier C."/>
            <person name="Wiesener A."/>
            <person name="Wohlleber E."/>
            <person name="Dufke A."/>
            <person name="Rossier E."/>
            <person name="Petsch C."/>
            <person name="Zweier M."/>
            <person name="Gohring I."/>
            <person name="Zink A.M."/>
            <person name="Rappold G."/>
            <person name="Schrock E."/>
            <person name="Wieczorek D."/>
            <person name="Riess O."/>
            <person name="Engels H."/>
            <person name="Rauch A."/>
            <person name="Reis A."/>
        </authorList>
    </citation>
    <scope>INVOLVEMENT IN CSS1</scope>
    <scope>VARIANTS ALA-94 INS; 128-ALA--ALA-130 DEL; HIS-165; SER-329; 401-GLY-GLY-402 DEL; GLY-402 DEL; 410-GLY-GLY-411 DEL; 416-GLY--GLY-420 DEL; VAL-446; ALA-479; VAL-512; PRO-533 INS; ASN-580; THR-614; GLU-959; LEU-1063; ILE-1175; PRO-1332; GLU-1354; ARG-1386; ASN-1404; SER-1494; LYS-1549; HIS-1589; MET-1656; SER-1742; GLU-1816 DEL; ARG-1856; ASN-1934; ARG-1981; ARG-2037 AND ARG-2246</scope>
</reference>
<reference key="16">
    <citation type="journal article" date="2012" name="Nat. Genet.">
        <title>Mutations affecting components of the SWI/SNF complex cause Coffin-Siris syndrome.</title>
        <authorList>
            <person name="Tsurusaki Y."/>
            <person name="Okamoto N."/>
            <person name="Ohashi H."/>
            <person name="Kosho T."/>
            <person name="Imai Y."/>
            <person name="Hibi-Ko Y."/>
            <person name="Kaname T."/>
            <person name="Naritomi K."/>
            <person name="Kawame H."/>
            <person name="Wakui K."/>
            <person name="Fukushima Y."/>
            <person name="Homma T."/>
            <person name="Kato M."/>
            <person name="Hiraki Y."/>
            <person name="Yamagata T."/>
            <person name="Yano S."/>
            <person name="Mizuno S."/>
            <person name="Sakazume S."/>
            <person name="Ishii T."/>
            <person name="Nagai T."/>
            <person name="Shiina M."/>
            <person name="Ogata K."/>
            <person name="Ohta T."/>
            <person name="Niikawa N."/>
            <person name="Miyatake S."/>
            <person name="Okada I."/>
            <person name="Mizuguchi T."/>
            <person name="Doi H."/>
            <person name="Saitsu H."/>
            <person name="Miyake N."/>
            <person name="Matsumoto N."/>
        </authorList>
    </citation>
    <scope>INVOLVEMENT IN CSS1</scope>
</reference>
<reference key="17">
    <citation type="journal article" date="2012" name="Nat. Genet.">
        <title>Mutations in SWI/SNF chromatin remodeling complex gene ARID1B cause Coffin-Siris syndrome.</title>
        <authorList>
            <person name="Santen G.W."/>
            <person name="Aten E."/>
            <person name="Sun Y."/>
            <person name="Almomani R."/>
            <person name="Gilissen C."/>
            <person name="Nielsen M."/>
            <person name="Kant S.G."/>
            <person name="Snoeck I.N."/>
            <person name="Peeters E.A."/>
            <person name="Hilhorst-Hofstee Y."/>
            <person name="Wessels M.W."/>
            <person name="den Hollander N.S."/>
            <person name="Ruivenkamp C.A."/>
            <person name="van Ommen G.J."/>
            <person name="Breuning M.H."/>
            <person name="den Dunnen J.T."/>
            <person name="van Haeringen A."/>
            <person name="Kriek M."/>
        </authorList>
    </citation>
    <scope>INVOLVEMENT IN CSS1</scope>
</reference>
<reference key="18">
    <citation type="journal article" date="2013" name="J. Proteome Res.">
        <title>Toward a comprehensive characterization of a human cancer cell phosphoproteome.</title>
        <authorList>
            <person name="Zhou H."/>
            <person name="Di Palma S."/>
            <person name="Preisinger C."/>
            <person name="Peng M."/>
            <person name="Polat A.N."/>
            <person name="Heck A.J."/>
            <person name="Mohammed S."/>
        </authorList>
    </citation>
    <scope>PHOSPHORYLATION [LARGE SCALE ANALYSIS] AT SER-585; SER-599; SER-1625; SER-1638 AND SER-1642</scope>
    <scope>IDENTIFICATION BY MASS SPECTROMETRY [LARGE SCALE ANALYSIS]</scope>
    <source>
        <tissue>Cervix carcinoma</tissue>
        <tissue>Erythroleukemia</tissue>
    </source>
</reference>
<reference key="19">
    <citation type="journal article" date="2014" name="J. Proteomics">
        <title>An enzyme assisted RP-RPLC approach for in-depth analysis of human liver phosphoproteome.</title>
        <authorList>
            <person name="Bian Y."/>
            <person name="Song C."/>
            <person name="Cheng K."/>
            <person name="Dong M."/>
            <person name="Wang F."/>
            <person name="Huang J."/>
            <person name="Sun D."/>
            <person name="Wang L."/>
            <person name="Ye M."/>
            <person name="Zou H."/>
        </authorList>
    </citation>
    <scope>IDENTIFICATION BY MASS SPECTROMETRY [LARGE SCALE ANALYSIS]</scope>
    <source>
        <tissue>Liver</tissue>
    </source>
</reference>
<reference key="20">
    <citation type="journal article" date="2014" name="Mol. Cell. Proteomics">
        <title>Immunoaffinity enrichment and mass spectrometry analysis of protein methylation.</title>
        <authorList>
            <person name="Guo A."/>
            <person name="Gu H."/>
            <person name="Zhou J."/>
            <person name="Mulhern D."/>
            <person name="Wang Y."/>
            <person name="Lee K.A."/>
            <person name="Yang V."/>
            <person name="Aguiar M."/>
            <person name="Kornhauser J."/>
            <person name="Jia X."/>
            <person name="Ren J."/>
            <person name="Beausoleil S.A."/>
            <person name="Silva J.C."/>
            <person name="Vemulapalli V."/>
            <person name="Bedford M.T."/>
            <person name="Comb M.J."/>
        </authorList>
    </citation>
    <scope>METHYLATION [LARGE SCALE ANALYSIS] AT ARG-640</scope>
    <scope>IDENTIFICATION BY MASS SPECTROMETRY [LARGE SCALE ANALYSIS]</scope>
    <source>
        <tissue>Colon carcinoma</tissue>
    </source>
</reference>
<reference key="21">
    <citation type="journal article" date="2003" name="Curr. Opin. Genet. Dev.">
        <title>Recent advances in understanding chromatin remodeling by SWI/SNF complexes.</title>
        <authorList>
            <person name="Martens J.A."/>
            <person name="Winston F."/>
        </authorList>
    </citation>
    <scope>REVIEW ON SWI/SNF CHROMATIN REMODELING COMPLEXES</scope>
</reference>
<reference key="22">
    <citation type="journal article" date="2004" name="Biochem. J.">
        <title>Two related ARID family proteins are alternative subunits of human SWI/SNF complexes.</title>
        <authorList>
            <person name="Wang X."/>
            <person name="Nagl N.G."/>
            <person name="Wilsker D."/>
            <person name="Van Scoy M."/>
            <person name="Pacchione S."/>
            <person name="Yaciuk P."/>
            <person name="Dallas P.B."/>
            <person name="Moran E."/>
        </authorList>
    </citation>
    <scope>DNA-BINDING</scope>
    <scope>IDENTIFICATION IN SWI/SNF COMPLEXES</scope>
    <scope>INTERACTION WITH SMARCA2; SMARCA4 AND SMARCC1</scope>
</reference>
<reference key="23">
    <citation type="journal article" date="2004" name="Nucleic Acids Res.">
        <title>The DNA-binding properties of the ARID-containing subunits of yeast and mammalian SWI/SNF complexes.</title>
        <authorList>
            <person name="Wilsker D."/>
            <person name="Patsialou A."/>
            <person name="Zumbrun S.D."/>
            <person name="Kim S."/>
            <person name="Chen Y."/>
            <person name="Dallas P.B."/>
            <person name="Moran E."/>
        </authorList>
    </citation>
    <scope>DNA-BINDING</scope>
</reference>
<reference key="24">
    <citation type="journal article" date="2008" name="Genes Dev.">
        <title>Regulation of muscle development by DPF3, a novel histone acetylation and methylation reader of the BAF chromatin remodeling complex.</title>
        <authorList>
            <person name="Lange M."/>
            <person name="Kaynak B."/>
            <person name="Forster U.B."/>
            <person name="Toenjes M."/>
            <person name="Fischer J.J."/>
            <person name="Grimm C."/>
            <person name="Schlesinger J."/>
            <person name="Just S."/>
            <person name="Dunkel I."/>
            <person name="Krueger T."/>
            <person name="Mebus S."/>
            <person name="Lehrach H."/>
            <person name="Lurz R."/>
            <person name="Gobom J."/>
            <person name="Rottbauer W."/>
            <person name="Abdelilah-Seyfried S."/>
            <person name="Sperling S."/>
        </authorList>
    </citation>
    <scope>IDENTIFICATION IN THE BAF COMPLEX</scope>
    <scope>IDENTIFICATION BY MASS SPECTROMETRY</scope>
</reference>
<reference key="25">
    <citation type="journal article" date="2012" name="J. Biol. Chem.">
        <title>SWI/SNF chromatin-remodeling factors: multiscale analyses and diverse functions.</title>
        <authorList>
            <person name="Euskirchen G."/>
            <person name="Auerbach R.K."/>
            <person name="Snyder M."/>
        </authorList>
    </citation>
    <scope>REVIEW ON SWI/SNF CHROMATIN REMODELING COMPLEXES</scope>
</reference>
<reference key="26">
    <citation type="journal article" date="2015" name="Sci. Adv.">
        <title>Mammalian SWI/SNF chromatin remodeling complexes and cancer: Mechanistic insights gained from human genomics.</title>
        <authorList>
            <person name="Kadoch C."/>
            <person name="Crabtree G.R."/>
        </authorList>
    </citation>
    <scope>REVIEW ON SWI/SNF CHROMATIN REMODELING COMPLEXES</scope>
</reference>
<reference key="27">
    <citation type="submission" date="2006-10" db="PDB data bank">
        <title>Crystal structure of the HBAF250B AT-rich interaction domain (ARID).</title>
        <authorList>
            <consortium name="RIKEN structural genomics initiative (RSGI)"/>
        </authorList>
    </citation>
    <scope>X-RAY CRYSTALLOGRAPHY (1.6 ANGSTROMS) OF 1124-1242</scope>
</reference>
<reference key="28">
    <citation type="journal article" date="2006" name="Science">
        <title>The consensus coding sequences of human breast and colorectal cancers.</title>
        <authorList>
            <person name="Sjoeblom T."/>
            <person name="Jones S."/>
            <person name="Wood L.D."/>
            <person name="Parsons D.W."/>
            <person name="Lin J."/>
            <person name="Barber T.D."/>
            <person name="Mandelker D."/>
            <person name="Leary R.J."/>
            <person name="Ptak J."/>
            <person name="Silliman N."/>
            <person name="Szabo S."/>
            <person name="Buckhaults P."/>
            <person name="Farrell C."/>
            <person name="Meeh P."/>
            <person name="Markowitz S.D."/>
            <person name="Willis J."/>
            <person name="Dawson D."/>
            <person name="Willson J.K.V."/>
            <person name="Gazdar A.F."/>
            <person name="Hartigan J."/>
            <person name="Wu L."/>
            <person name="Liu C."/>
            <person name="Parmigiani G."/>
            <person name="Park B.H."/>
            <person name="Bachman K.E."/>
            <person name="Papadopoulos N."/>
            <person name="Vogelstein B."/>
            <person name="Kinzler K.W."/>
            <person name="Velculescu V.E."/>
        </authorList>
    </citation>
    <scope>VARIANT [LARGE SCALE ANALYSIS] ALA-897</scope>
</reference>
<reference key="29">
    <citation type="journal article" date="2015" name="BMC Genomics">
        <title>De novo mutations in ARID1B associated with both syndromic and non-syndromic short stature.</title>
        <authorList>
            <person name="Yu Y."/>
            <person name="Yao R."/>
            <person name="Wang L."/>
            <person name="Fan Y."/>
            <person name="Huang X."/>
            <person name="Hirschhorn J."/>
            <person name="Dauber A."/>
            <person name="Shen Y."/>
        </authorList>
    </citation>
    <scope>VARIANTS LEU-854; ALA-1519; LEU-1646 AND TYR-2070</scope>
</reference>
<reference key="30">
    <citation type="journal article" date="2015" name="Neuron">
        <title>Targeted DNA Sequencing from Autism Spectrum Disorder Brains Implicates Multiple Genetic Mechanisms.</title>
        <authorList>
            <person name="D'Gama A.M."/>
            <person name="Pochareddy S."/>
            <person name="Li M."/>
            <person name="Jamuar S.S."/>
            <person name="Reiff R.E."/>
            <person name="Lam A.T."/>
            <person name="Sestan N."/>
            <person name="Walsh C.A."/>
        </authorList>
    </citation>
    <scope>VARIANTS ARG-571 AND SER-1496</scope>
</reference>
<keyword id="KW-0002">3D-structure</keyword>
<keyword id="KW-0007">Acetylation</keyword>
<keyword id="KW-0024">Alternative initiation</keyword>
<keyword id="KW-0025">Alternative splicing</keyword>
<keyword id="KW-0156">Chromatin regulator</keyword>
<keyword id="KW-0238">DNA-binding</keyword>
<keyword id="KW-0991">Intellectual disability</keyword>
<keyword id="KW-0488">Methylation</keyword>
<keyword id="KW-0524">Neurogenesis</keyword>
<keyword id="KW-0539">Nucleus</keyword>
<keyword id="KW-0597">Phosphoprotein</keyword>
<keyword id="KW-1267">Proteomics identification</keyword>
<keyword id="KW-1185">Reference proteome</keyword>
<keyword id="KW-0804">Transcription</keyword>
<keyword id="KW-0805">Transcription regulation</keyword>
<keyword id="KW-0818">Triplet repeat expansion</keyword>
<feature type="chain" id="PRO_0000200576" description="AT-rich interactive domain-containing protein 1B">
    <location>
        <begin position="1"/>
        <end position="2319"/>
    </location>
</feature>
<feature type="domain" description="ARID" evidence="3">
    <location>
        <begin position="1136"/>
        <end position="1227"/>
    </location>
</feature>
<feature type="region of interest" description="Disordered" evidence="4">
    <location>
        <begin position="1"/>
        <end position="74"/>
    </location>
</feature>
<feature type="region of interest" description="Disordered" evidence="4">
    <location>
        <begin position="155"/>
        <end position="306"/>
    </location>
</feature>
<feature type="region of interest" description="Disordered" evidence="4">
    <location>
        <begin position="321"/>
        <end position="414"/>
    </location>
</feature>
<feature type="region of interest" description="Disordered" evidence="4">
    <location>
        <begin position="487"/>
        <end position="546"/>
    </location>
</feature>
<feature type="region of interest" description="Disordered" evidence="4">
    <location>
        <begin position="577"/>
        <end position="1062"/>
    </location>
</feature>
<feature type="region of interest" description="Disordered" evidence="4">
    <location>
        <begin position="1085"/>
        <end position="1129"/>
    </location>
</feature>
<feature type="region of interest" description="Disordered" evidence="4">
    <location>
        <begin position="1230"/>
        <end position="1334"/>
    </location>
</feature>
<feature type="region of interest" description="Disordered" evidence="4">
    <location>
        <begin position="1346"/>
        <end position="1443"/>
    </location>
</feature>
<feature type="region of interest" description="Disordered" evidence="4">
    <location>
        <begin position="1475"/>
        <end position="1647"/>
    </location>
</feature>
<feature type="region of interest" description="Disordered" evidence="4">
    <location>
        <begin position="1782"/>
        <end position="1852"/>
    </location>
</feature>
<feature type="region of interest" description="Disordered" evidence="4">
    <location>
        <begin position="1904"/>
        <end position="1941"/>
    </location>
</feature>
<feature type="region of interest" description="Disordered" evidence="4">
    <location>
        <begin position="1954"/>
        <end position="1973"/>
    </location>
</feature>
<feature type="short sequence motif" description="LXXLL">
    <location>
        <begin position="502"/>
        <end position="506"/>
    </location>
</feature>
<feature type="short sequence motif" description="Nuclear localization signal" evidence="2">
    <location>
        <begin position="1441"/>
        <end position="1460"/>
    </location>
</feature>
<feature type="short sequence motif" description="LXXLL">
    <location>
        <begin position="2119"/>
        <end position="2123"/>
    </location>
</feature>
<feature type="compositionally biased region" description="Low complexity" evidence="4">
    <location>
        <begin position="1"/>
        <end position="21"/>
    </location>
</feature>
<feature type="compositionally biased region" description="Low complexity" evidence="4">
    <location>
        <begin position="43"/>
        <end position="56"/>
    </location>
</feature>
<feature type="compositionally biased region" description="Gly residues" evidence="4">
    <location>
        <begin position="57"/>
        <end position="68"/>
    </location>
</feature>
<feature type="compositionally biased region" description="Basic residues" evidence="4">
    <location>
        <begin position="165"/>
        <end position="188"/>
    </location>
</feature>
<feature type="compositionally biased region" description="Low complexity" evidence="4">
    <location>
        <begin position="189"/>
        <end position="215"/>
    </location>
</feature>
<feature type="compositionally biased region" description="Low complexity" evidence="4">
    <location>
        <begin position="343"/>
        <end position="363"/>
    </location>
</feature>
<feature type="compositionally biased region" description="Polar residues" evidence="4">
    <location>
        <begin position="365"/>
        <end position="379"/>
    </location>
</feature>
<feature type="compositionally biased region" description="Gly residues" evidence="4">
    <location>
        <begin position="388"/>
        <end position="414"/>
    </location>
</feature>
<feature type="compositionally biased region" description="Polar residues" evidence="4">
    <location>
        <begin position="489"/>
        <end position="510"/>
    </location>
</feature>
<feature type="compositionally biased region" description="Low complexity" evidence="4">
    <location>
        <begin position="536"/>
        <end position="546"/>
    </location>
</feature>
<feature type="compositionally biased region" description="Low complexity" evidence="4">
    <location>
        <begin position="620"/>
        <end position="630"/>
    </location>
</feature>
<feature type="compositionally biased region" description="Low complexity" evidence="4">
    <location>
        <begin position="651"/>
        <end position="670"/>
    </location>
</feature>
<feature type="compositionally biased region" description="Low complexity" evidence="4">
    <location>
        <begin position="677"/>
        <end position="687"/>
    </location>
</feature>
<feature type="compositionally biased region" description="Low complexity" evidence="4">
    <location>
        <begin position="695"/>
        <end position="712"/>
    </location>
</feature>
<feature type="compositionally biased region" description="Low complexity" evidence="4">
    <location>
        <begin position="767"/>
        <end position="783"/>
    </location>
</feature>
<feature type="compositionally biased region" description="Low complexity" evidence="4">
    <location>
        <begin position="811"/>
        <end position="832"/>
    </location>
</feature>
<feature type="compositionally biased region" description="Low complexity" evidence="4">
    <location>
        <begin position="840"/>
        <end position="849"/>
    </location>
</feature>
<feature type="compositionally biased region" description="Polar residues" evidence="4">
    <location>
        <begin position="866"/>
        <end position="880"/>
    </location>
</feature>
<feature type="compositionally biased region" description="Low complexity" evidence="4">
    <location>
        <begin position="881"/>
        <end position="892"/>
    </location>
</feature>
<feature type="compositionally biased region" description="Polar residues" evidence="4">
    <location>
        <begin position="899"/>
        <end position="923"/>
    </location>
</feature>
<feature type="compositionally biased region" description="Polar residues" evidence="4">
    <location>
        <begin position="947"/>
        <end position="958"/>
    </location>
</feature>
<feature type="compositionally biased region" description="Low complexity" evidence="4">
    <location>
        <begin position="980"/>
        <end position="994"/>
    </location>
</feature>
<feature type="compositionally biased region" description="Low complexity" evidence="4">
    <location>
        <begin position="1014"/>
        <end position="1028"/>
    </location>
</feature>
<feature type="compositionally biased region" description="Polar residues" evidence="4">
    <location>
        <begin position="1029"/>
        <end position="1062"/>
    </location>
</feature>
<feature type="compositionally biased region" description="Polar residues" evidence="4">
    <location>
        <begin position="1254"/>
        <end position="1273"/>
    </location>
</feature>
<feature type="compositionally biased region" description="Polar residues" evidence="4">
    <location>
        <begin position="1287"/>
        <end position="1304"/>
    </location>
</feature>
<feature type="compositionally biased region" description="Low complexity" evidence="4">
    <location>
        <begin position="1305"/>
        <end position="1319"/>
    </location>
</feature>
<feature type="compositionally biased region" description="Polar residues" evidence="4">
    <location>
        <begin position="1320"/>
        <end position="1334"/>
    </location>
</feature>
<feature type="compositionally biased region" description="Polar residues" evidence="4">
    <location>
        <begin position="1364"/>
        <end position="1388"/>
    </location>
</feature>
<feature type="compositionally biased region" description="Low complexity" evidence="4">
    <location>
        <begin position="1426"/>
        <end position="1440"/>
    </location>
</feature>
<feature type="compositionally biased region" description="Polar residues" evidence="4">
    <location>
        <begin position="1522"/>
        <end position="1534"/>
    </location>
</feature>
<feature type="compositionally biased region" description="Polar residues" evidence="4">
    <location>
        <begin position="1579"/>
        <end position="1601"/>
    </location>
</feature>
<feature type="compositionally biased region" description="Polar residues" evidence="4">
    <location>
        <begin position="1627"/>
        <end position="1641"/>
    </location>
</feature>
<feature type="compositionally biased region" description="Basic and acidic residues" evidence="4">
    <location>
        <begin position="1782"/>
        <end position="1791"/>
    </location>
</feature>
<feature type="compositionally biased region" description="Acidic residues" evidence="4">
    <location>
        <begin position="1799"/>
        <end position="1823"/>
    </location>
</feature>
<feature type="compositionally biased region" description="Basic and acidic residues" evidence="4">
    <location>
        <begin position="1842"/>
        <end position="1852"/>
    </location>
</feature>
<feature type="compositionally biased region" description="Basic and acidic residues" evidence="4">
    <location>
        <begin position="1925"/>
        <end position="1940"/>
    </location>
</feature>
<feature type="modified residue" description="Asymmetric dimethylarginine" evidence="1">
    <location>
        <position position="487"/>
    </location>
</feature>
<feature type="modified residue" description="Phosphoserine" evidence="27">
    <location>
        <position position="585"/>
    </location>
</feature>
<feature type="modified residue" description="Phosphoserine" evidence="22 27">
    <location>
        <position position="599"/>
    </location>
</feature>
<feature type="modified residue" description="Asymmetric dimethylarginine" evidence="1">
    <location>
        <position position="608"/>
    </location>
</feature>
<feature type="modified residue" description="Asymmetric dimethylarginine" evidence="28">
    <location>
        <position position="640"/>
    </location>
</feature>
<feature type="modified residue" description="Phosphoserine" evidence="27">
    <location>
        <position position="1625"/>
    </location>
</feature>
<feature type="modified residue" description="Phosphoserine" evidence="22 25 26 27">
    <location>
        <position position="1638"/>
    </location>
</feature>
<feature type="modified residue" description="Phosphoserine" evidence="22 25 27">
    <location>
        <position position="1642"/>
    </location>
</feature>
<feature type="modified residue" description="Phosphoserine" evidence="26">
    <location>
        <position position="1798"/>
    </location>
</feature>
<feature type="modified residue" description="N6-acetyllysine" evidence="24">
    <location>
        <position position="1860"/>
    </location>
</feature>
<feature type="splice variant" id="VSP_061510" description="In isoform 1.">
    <location>
        <begin position="1"/>
        <end position="83"/>
    </location>
</feature>
<feature type="splice variant" id="VSP_061511" description="In isoform 2.">
    <original>Q</original>
    <variation>QDSGDATWKETFWL</variation>
    <location>
        <position position="662"/>
    </location>
</feature>
<feature type="splice variant" id="VSP_061512" description="In isoform 3.">
    <original>K</original>
    <variation>KDSYSSQGISQPPTPGNLPVPSPMSPSSASISSFHGDESDSISSPGWPKTPSSP</variation>
    <location>
        <position position="1115"/>
    </location>
</feature>
<feature type="sequence variant" id="VAR_067662" evidence="12">
    <original>A</original>
    <variation>AA</variation>
    <location>
        <position position="94"/>
    </location>
</feature>
<feature type="sequence variant" id="VAR_067663" evidence="12">
    <location>
        <begin position="128"/>
        <end position="130"/>
    </location>
</feature>
<feature type="sequence variant" id="VAR_067664" description="In dbSNP:rs1251241593." evidence="12">
    <original>Q</original>
    <variation>H</variation>
    <location>
        <position position="165"/>
    </location>
</feature>
<feature type="sequence variant" id="VAR_067665" description="In dbSNP:rs375160616." evidence="12">
    <original>G</original>
    <variation>S</variation>
    <location>
        <position position="329"/>
    </location>
</feature>
<feature type="sequence variant" id="VAR_067666" evidence="12">
    <location>
        <begin position="401"/>
        <end position="402"/>
    </location>
</feature>
<feature type="sequence variant" id="VAR_067667" evidence="12">
    <location>
        <position position="402"/>
    </location>
</feature>
<feature type="sequence variant" id="VAR_067668" evidence="12">
    <location>
        <begin position="410"/>
        <end position="411"/>
    </location>
</feature>
<feature type="sequence variant" id="VAR_067669" evidence="12">
    <location>
        <begin position="416"/>
        <end position="420"/>
    </location>
</feature>
<feature type="sequence variant" id="VAR_067670" description="In dbSNP:rs748273011." evidence="12">
    <original>A</original>
    <variation>V</variation>
    <location>
        <position position="446"/>
    </location>
</feature>
<feature type="sequence variant" id="VAR_067671" description="In dbSNP:rs760718156." evidence="12">
    <original>G</original>
    <variation>A</variation>
    <location>
        <position position="479"/>
    </location>
</feature>
<feature type="sequence variant" id="VAR_067672" description="In dbSNP:rs199948752." evidence="12">
    <original>M</original>
    <variation>V</variation>
    <location>
        <position position="512"/>
    </location>
</feature>
<feature type="sequence variant" id="VAR_067673" evidence="12">
    <original>P</original>
    <variation>PP</variation>
    <location>
        <position position="533"/>
    </location>
</feature>
<feature type="sequence variant" id="VAR_078697" description="Found in a patient with autism; uncertain significance; dbSNP:rs769085274." evidence="16">
    <original>P</original>
    <variation>R</variation>
    <location>
        <position position="571"/>
    </location>
</feature>
<feature type="sequence variant" id="VAR_067674" description="In dbSNP:rs764716697." evidence="12">
    <original>S</original>
    <variation>N</variation>
    <location>
        <position position="580"/>
    </location>
</feature>
<feature type="sequence variant" id="VAR_067675" description="In dbSNP:rs141260832." evidence="12">
    <original>M</original>
    <variation>T</variation>
    <location>
        <position position="614"/>
    </location>
</feature>
<feature type="sequence variant" id="VAR_077456" description="Found in a patient with short stature; uncertain significance." evidence="15">
    <original>S</original>
    <variation>L</variation>
    <location>
        <position position="854"/>
    </location>
</feature>
<feature type="sequence variant" id="VAR_036257" description="In a breast cancer sample; somatic mutation." evidence="10">
    <original>G</original>
    <variation>A</variation>
    <location>
        <position position="897"/>
    </location>
</feature>
<feature type="sequence variant" id="VAR_067676" description="In dbSNP:rs138254872." evidence="12">
    <original>Q</original>
    <variation>E</variation>
    <location>
        <position position="959"/>
    </location>
</feature>
<feature type="sequence variant" id="VAR_067677" description="In dbSNP:rs139620600." evidence="12">
    <original>Q</original>
    <variation>L</variation>
    <location>
        <position position="1063"/>
    </location>
</feature>
<feature type="sequence variant" id="VAR_067678" description="In dbSNP:rs775526039." evidence="12">
    <original>V</original>
    <variation>I</variation>
    <location>
        <position position="1175"/>
    </location>
</feature>
<feature type="sequence variant" id="VAR_067679" description="In dbSNP:rs768013849." evidence="12">
    <original>Q</original>
    <variation>P</variation>
    <location>
        <position position="1332"/>
    </location>
</feature>
<feature type="sequence variant" id="VAR_067680" description="In dbSNP:rs149389876." evidence="12">
    <original>G</original>
    <variation>E</variation>
    <location>
        <position position="1354"/>
    </location>
</feature>
<feature type="sequence variant" id="VAR_067681" description="In dbSNP:rs199674889." evidence="12">
    <original>G</original>
    <variation>R</variation>
    <location>
        <position position="1386"/>
    </location>
</feature>
<feature type="sequence variant" id="VAR_067682" description="In dbSNP:rs142808724." evidence="12">
    <original>S</original>
    <variation>N</variation>
    <location>
        <position position="1404"/>
    </location>
</feature>
<feature type="sequence variant" id="VAR_067683" evidence="12">
    <original>P</original>
    <variation>S</variation>
    <location>
        <position position="1494"/>
    </location>
</feature>
<feature type="sequence variant" id="VAR_078698" description="Found in a patient with autism; uncertain significance; dbSNP:rs1051017338." evidence="16">
    <original>P</original>
    <variation>S</variation>
    <location>
        <position position="1496"/>
    </location>
</feature>
<feature type="sequence variant" id="VAR_077457" description="Found in a patient with short stature; likely pathogenic; de novo mutation; dbSNP:rs2128373494." evidence="15">
    <original>G</original>
    <variation>A</variation>
    <location>
        <position position="1519"/>
    </location>
</feature>
<feature type="sequence variant" id="VAR_067684" evidence="12">
    <original>Q</original>
    <variation>K</variation>
    <location>
        <position position="1549"/>
    </location>
</feature>
<feature type="sequence variant" id="VAR_067685" description="In dbSNP:rs1449208173." evidence="12">
    <original>R</original>
    <variation>H</variation>
    <location>
        <position position="1589"/>
    </location>
</feature>
<feature type="sequence variant" id="VAR_077458" description="Found in a patient with short stature; uncertain significance; dbSNP:rs1455506883." evidence="15">
    <original>P</original>
    <variation>L</variation>
    <location>
        <position position="1646"/>
    </location>
</feature>
<feature type="sequence variant" id="VAR_067686" description="In dbSNP:rs777745107." evidence="12">
    <original>T</original>
    <variation>M</variation>
    <location>
        <position position="1656"/>
    </location>
</feature>
<feature type="sequence variant" id="VAR_067687" description="In dbSNP:rs140177120." evidence="12">
    <original>N</original>
    <variation>S</variation>
    <location>
        <position position="1742"/>
    </location>
</feature>
<feature type="sequence variant" id="VAR_067688" evidence="12">
    <location>
        <position position="1816"/>
    </location>
</feature>
<feature type="sequence variant" id="VAR_067689" description="In dbSNP:rs574141489." evidence="12">
    <original>K</original>
    <variation>R</variation>
    <location>
        <position position="1856"/>
    </location>
</feature>
<feature type="sequence variant" id="VAR_067690" description="In dbSNP:rs200305796." evidence="12">
    <original>D</original>
    <variation>N</variation>
    <location>
        <position position="1934"/>
    </location>
</feature>
<feature type="sequence variant" id="VAR_067691" description="In dbSNP:rs758204258." evidence="12">
    <original>K</original>
    <variation>R</variation>
    <location>
        <position position="1981"/>
    </location>
</feature>
<feature type="sequence variant" id="VAR_067692" description="In dbSNP:rs756220726." evidence="12">
    <original>K</original>
    <variation>R</variation>
    <location>
        <position position="2037"/>
    </location>
</feature>
<feature type="sequence variant" id="VAR_077459" description="Found in a patient with short stature; likely pathogenic; de novo mutation." evidence="15">
    <original>D</original>
    <variation>Y</variation>
    <location>
        <position position="2070"/>
    </location>
</feature>
<feature type="sequence variant" id="VAR_067693" evidence="12">
    <original>Q</original>
    <variation>R</variation>
    <location>
        <position position="2246"/>
    </location>
</feature>
<feature type="sequence conflict" description="In Ref. 5; AAN70985." evidence="20" ref="5">
    <original>S</original>
    <variation>N</variation>
    <location>
        <position position="353"/>
    </location>
</feature>
<feature type="sequence conflict" description="In Ref. 4; AAN03447." evidence="20" ref="4">
    <original>AGA</original>
    <variation>SRS</variation>
    <location>
        <begin position="417"/>
        <end position="419"/>
    </location>
</feature>
<feature type="sequence conflict" description="In Ref. 5; AAN70985." evidence="20" ref="5">
    <original>P</original>
    <variation>A</variation>
    <location>
        <position position="529"/>
    </location>
</feature>
<feature type="sequence conflict" description="In Ref. 6; AAL76077." evidence="20" ref="6">
    <original>V</original>
    <variation>A</variation>
    <location>
        <position position="770"/>
    </location>
</feature>
<feature type="sequence conflict" description="In Ref. 6; AAL76077." evidence="20" ref="6">
    <original>T</original>
    <variation>P</variation>
    <location>
        <position position="987"/>
    </location>
</feature>
<feature type="sequence conflict" description="In Ref. 7; AAG36928." evidence="20" ref="7">
    <original>T</original>
    <variation>I</variation>
    <location>
        <position position="1284"/>
    </location>
</feature>
<feature type="sequence conflict" description="In Ref. 5; AAN70985." evidence="20" ref="5">
    <original>P</original>
    <variation>S</variation>
    <location>
        <position position="1422"/>
    </location>
</feature>
<feature type="sequence conflict" description="In Ref. 8; BAA86549." evidence="20" ref="8">
    <original>P</original>
    <variation>L</variation>
    <location>
        <position position="1515"/>
    </location>
</feature>
<feature type="sequence conflict" description="In Ref. 5; AAN70985." evidence="20" ref="5">
    <original>P</original>
    <variation>S</variation>
    <location>
        <position position="1617"/>
    </location>
</feature>
<feature type="sequence conflict" description="In Ref. 6; AAL76077." evidence="20" ref="6">
    <original>D</original>
    <variation>N</variation>
    <location>
        <position position="1796"/>
    </location>
</feature>
<feature type="sequence conflict" description="In Ref. 7; AAG36928." evidence="20" ref="7">
    <original>D</original>
    <variation>N</variation>
    <location>
        <position position="2279"/>
    </location>
</feature>
<feature type="helix" evidence="29">
    <location>
        <begin position="1129"/>
        <end position="1132"/>
    </location>
</feature>
<feature type="helix" evidence="29">
    <location>
        <begin position="1139"/>
        <end position="1153"/>
    </location>
</feature>
<feature type="helix" evidence="29">
    <location>
        <begin position="1170"/>
        <end position="1180"/>
    </location>
</feature>
<feature type="helix" evidence="29">
    <location>
        <begin position="1183"/>
        <end position="1189"/>
    </location>
</feature>
<feature type="helix" evidence="29">
    <location>
        <begin position="1192"/>
        <end position="1198"/>
    </location>
</feature>
<feature type="helix" evidence="29">
    <location>
        <begin position="1205"/>
        <end position="1218"/>
    </location>
</feature>
<feature type="helix" evidence="29">
    <location>
        <begin position="1220"/>
        <end position="1228"/>
    </location>
</feature>
<feature type="initiator methionine" description="Removed" evidence="23">
    <location sequence="Q8NFD5-1">
        <position position="1"/>
    </location>
</feature>
<feature type="modified residue" description="N-acetylalanine" evidence="23">
    <location sequence="Q8NFD5-1">
        <position position="2"/>
    </location>
</feature>
<organism>
    <name type="scientific">Homo sapiens</name>
    <name type="common">Human</name>
    <dbReference type="NCBI Taxonomy" id="9606"/>
    <lineage>
        <taxon>Eukaryota</taxon>
        <taxon>Metazoa</taxon>
        <taxon>Chordata</taxon>
        <taxon>Craniata</taxon>
        <taxon>Vertebrata</taxon>
        <taxon>Euteleostomi</taxon>
        <taxon>Mammalia</taxon>
        <taxon>Eutheria</taxon>
        <taxon>Euarchontoglires</taxon>
        <taxon>Primates</taxon>
        <taxon>Haplorrhini</taxon>
        <taxon>Catarrhini</taxon>
        <taxon>Hominidae</taxon>
        <taxon>Homo</taxon>
    </lineage>
</organism>
<gene>
    <name evidence="21" type="primary">ARID1B</name>
    <name type="synonym">BAF250B</name>
    <name type="synonym">DAN15</name>
    <name type="synonym">KIAA1235</name>
    <name type="synonym">OSA2</name>
</gene>
<sequence length="2319" mass="243943">MAARAAAAAAAAAARARARAGSGERRAPPGPRPAPGARDLEAGARGAAAAAAAPGPMLGGGGDGGGGLNSVHHHPLLPRHELNMAHNAGAAAAAGTHSAKSGGSEAALKEGGSAAALSSSSSSSAAAAAASSSSSSGPGSAMETGLLPNHKLKTVGEAPAAPPHQQHHHHHHAHHHHHHAHHLHHHHALQQQLNQFQQQQQQQQQQQQQQQQQQHPISNNNSLGGAGGGAPQPGPDMEQPQHGGAKDSAAGGQADPPGPPLLSKPGDEDDAPPKMGEPAGGRYEHPGLGALGTQQPPVAVPGGGGGPAAVPEFNNYYGSAAPASGGPGGRAGPCFDQHGGQQSPGMGMMHSASAAAAGAPGSMDPLQNSHEGYPNSQCNHYPGYSRPGAGGGGGGGGGGGGGSGGGGGGGGAGAGGAGAGAVAAAAAAAAAAAGGGGGGGYGGSSAGYGVLSSPRQQGGGMMMGPGGGGAASLSKAAAGSAAGGFQRFAGQNQHPSGATPTLNQLLTSPSPMMRSYGGSYPEYSSPSAPPPPPSQPQSQAAAAGAAAGGQQAAAGMGLGKDMGAQYAAASPAWAAAQQRSHPAMSPGTPGPTMGRSQGSPMDPMVMKRPQLYGMGSNPHSQPQQSSPYPGGSYGPPGPQRYPIGIQGRTPGAMAGMQYPQQQMPPQYGQQGVSGYCQQGQQPYYSQQPQPPHLPPQAQYLPSQSQQRYQPQQDMSQEGYGTRSQPPLAPGKPNHEDLNLIQQERPSSLPDLSGSIDDLPTGTEATLSSAVSASGSTSSQGDQSNPAQSPFSPHASPHLSSIPGGPSPSPVGSPVGSNQSRSGPISPASIPGSQMPPQPPGSQSESSSHPALSQSPMPQERGFMAGTQRNPQMAQYGPQQTGPSMSPHPSPGGQMHAGISSFQQSNSSGTYGPQMSQYGPQGNYSRPPAYSGVPSASYSGPGPGMGISANNQMHGQGPSQPCGAVPLGRMPSAGMQNRPFPGNMSSMTPSSPGMSQQGGPGMGPPMPTVNRKAQEAAAAVMQAAANSAQSRQGSFPGMNQSGLMASSSPYSQPMNNSSSLMNTQAPPYSMAPAMVNSSAASVGLADMMSPGESKLPLPLKADGKEEGTPQPESKSKKSSSSTTTGEKITKVYELGNEPERKLWVDRYLTFMEERGSPVSSLPAVGKKPLDLFRLYVCVKEIGGLAQVNKNKKWRELATNLNVGTSSSAASSLKKQYIQYLFAFECKIERGEEPPPEVFSTGDTKKQPKLQPPSPANSGSLQGPQTPQSTGSNSMAEVPGDLKPPTPASTPHGQMTPMQGGRSSTISVHDPFSDVSDSSFPKRNSMTPNAPYQQGMSMPDVMGRMPYEPNKDPFGGMRKVPGSSEPFMTQGQMPNSSMQDMYNQSPSGAMSNLGMGQRQQFPYGASYDRRHEPYGQQYPGQGPPSGQPPYGGHQPGLYPQQPNYKRHMDGMYGPPAKRHEGDMYNMQYSSQQQEMYNQYGGSYSGPDRRPIQGQYPYPYSRERMQGPGQIQTHGIPPQMMGGPLQSSSSEGPQQNMWAARNDMPYPYQNRQGPGGPTQAPPYPGMNRTDDMMVPDQRINHESQWPSHVSQRQPYMSSSASMQPITRPPQPSYQTPPSLPNHISRAPSPASFQRSLENRMSPSKSPFLPSMKMQKVMPTVPTSQVTGPPPQPPPIRREITFPPGSVEASQPVLKQRRKITSKDIVTPEAWRVMMSLKSGLLAESTWALDTINILLYDDSTVATFNLSQLSGFLELLVEYFRKCLIDIFGILMEYEVGDPSQKALDHNAARKDDSQSLADDSGKEEEDAECIDDDEEDEEDEEEDSEKTESDEKSSIALTAPDAAADPKEKPKQASKFDKLPIKIVKKNNLFVVDRSDKLGRVQEFNSGLLHWQLGGGDTTEHIQTHFESKMEIPPRRRPPPPLSSAGRKKEQEGKGDSEEQQEKSIIATIDDVLSARPGALPEDANPGPQTESSKFPFGIQQAKSHRNIKLLEDEPRSRDETPLCTIAHWQDSLAKRCICVSNIVRSLSFVPGNDAEMSKHPGLVLILGKLILLHHEHPERKRAPQTYEKEEDEDKGVACSKDEWWWDCLEVLRDNTLVTLANISGQLDLSAYTESICLPILDGLLHWMVCPSAEAQDPFPTVGPNSVLSPQRLVLETLCKLSIQDNNVDLILATPPFSRQEKFYATLVRYVGDRKNPVCREMSMALLSNLAQGDALAARAIAVQKGSIGNLISFLEDGVTMAQYQQSQHNLMHMQPPPLEPPSVDMMCRAAKALLAMARVDENRSEFLLHEGRLLDISISAVLNSLVASVICDVLFQIGQL</sequence>
<evidence type="ECO:0000250" key="1">
    <source>
        <dbReference type="UniProtKB" id="E9Q4N7"/>
    </source>
</evidence>
<evidence type="ECO:0000250" key="2">
    <source>
        <dbReference type="UniProtKB" id="O14497"/>
    </source>
</evidence>
<evidence type="ECO:0000255" key="3">
    <source>
        <dbReference type="PROSITE-ProRule" id="PRU00355"/>
    </source>
</evidence>
<evidence type="ECO:0000256" key="4">
    <source>
        <dbReference type="SAM" id="MobiDB-lite"/>
    </source>
</evidence>
<evidence type="ECO:0000269" key="5">
    <source>
    </source>
</evidence>
<evidence type="ECO:0000269" key="6">
    <source>
    </source>
</evidence>
<evidence type="ECO:0000269" key="7">
    <source>
    </source>
</evidence>
<evidence type="ECO:0000269" key="8">
    <source>
    </source>
</evidence>
<evidence type="ECO:0000269" key="9">
    <source>
    </source>
</evidence>
<evidence type="ECO:0000269" key="10">
    <source>
    </source>
</evidence>
<evidence type="ECO:0000269" key="11">
    <source>
    </source>
</evidence>
<evidence type="ECO:0000269" key="12">
    <source>
    </source>
</evidence>
<evidence type="ECO:0000269" key="13">
    <source>
    </source>
</evidence>
<evidence type="ECO:0000269" key="14">
    <source>
    </source>
</evidence>
<evidence type="ECO:0000269" key="15">
    <source>
    </source>
</evidence>
<evidence type="ECO:0000269" key="16">
    <source>
    </source>
</evidence>
<evidence type="ECO:0000303" key="17">
    <source>
    </source>
</evidence>
<evidence type="ECO:0000303" key="18">
    <source>
    </source>
</evidence>
<evidence type="ECO:0000303" key="19">
    <source>
    </source>
</evidence>
<evidence type="ECO:0000305" key="20"/>
<evidence type="ECO:0000312" key="21">
    <source>
        <dbReference type="HGNC" id="HGNC:18040"/>
    </source>
</evidence>
<evidence type="ECO:0007744" key="22">
    <source>
    </source>
</evidence>
<evidence type="ECO:0007744" key="23">
    <source>
    </source>
</evidence>
<evidence type="ECO:0007744" key="24">
    <source>
    </source>
</evidence>
<evidence type="ECO:0007744" key="25">
    <source>
    </source>
</evidence>
<evidence type="ECO:0007744" key="26">
    <source>
    </source>
</evidence>
<evidence type="ECO:0007744" key="27">
    <source>
    </source>
</evidence>
<evidence type="ECO:0007744" key="28">
    <source>
    </source>
</evidence>
<evidence type="ECO:0007829" key="29">
    <source>
        <dbReference type="PDB" id="2CXY"/>
    </source>
</evidence>
<proteinExistence type="evidence at protein level"/>